<protein>
    <recommendedName>
        <fullName evidence="1">UPF0301 protein MCA0413 1</fullName>
    </recommendedName>
</protein>
<dbReference type="EMBL" id="AE017282">
    <property type="protein sequence ID" value="AAU90427.1"/>
    <property type="molecule type" value="Genomic_DNA"/>
</dbReference>
<dbReference type="SMR" id="Q60BQ2"/>
<dbReference type="STRING" id="243233.MCA0413"/>
<dbReference type="KEGG" id="mca:MCA0413"/>
<dbReference type="eggNOG" id="COG1678">
    <property type="taxonomic scope" value="Bacteria"/>
</dbReference>
<dbReference type="HOGENOM" id="CLU_057596_1_0_6"/>
<dbReference type="Proteomes" id="UP000006821">
    <property type="component" value="Chromosome"/>
</dbReference>
<dbReference type="GO" id="GO:0005829">
    <property type="term" value="C:cytosol"/>
    <property type="evidence" value="ECO:0007669"/>
    <property type="project" value="TreeGrafter"/>
</dbReference>
<dbReference type="Gene3D" id="3.40.1740.10">
    <property type="entry name" value="VC0467-like"/>
    <property type="match status" value="1"/>
</dbReference>
<dbReference type="HAMAP" id="MF_00758">
    <property type="entry name" value="UPF0301"/>
    <property type="match status" value="1"/>
</dbReference>
<dbReference type="InterPro" id="IPR003774">
    <property type="entry name" value="AlgH-like"/>
</dbReference>
<dbReference type="PANTHER" id="PTHR30327">
    <property type="entry name" value="UNCHARACTERIZED PROTEIN YQGE"/>
    <property type="match status" value="1"/>
</dbReference>
<dbReference type="PANTHER" id="PTHR30327:SF1">
    <property type="entry name" value="UPF0301 PROTEIN YQGE"/>
    <property type="match status" value="1"/>
</dbReference>
<dbReference type="Pfam" id="PF02622">
    <property type="entry name" value="DUF179"/>
    <property type="match status" value="1"/>
</dbReference>
<dbReference type="SUPFAM" id="SSF143456">
    <property type="entry name" value="VC0467-like"/>
    <property type="match status" value="1"/>
</dbReference>
<gene>
    <name type="ordered locus">MCA0413</name>
</gene>
<feature type="chain" id="PRO_0000258840" description="UPF0301 protein MCA0413 1">
    <location>
        <begin position="1"/>
        <end position="182"/>
    </location>
</feature>
<name>Y413_METCA</name>
<sequence>MRPPEIPEGHADTSGQFLVAHPKMPANIFAHSVIYVVSHNADGAMGLIVNRLAGAGPLGKLLEAFGLASKAQREIKLYLGGPVGIGQGFVLHSDDYAGASTRALKKGLSLSTGLDVLEAIARGRGPRQVRMLFGYAGWSPGQLDGEIARGDWLLAPADTSLIFSEEPDKVWEEALKHAGLPL</sequence>
<reference key="1">
    <citation type="journal article" date="2004" name="PLoS Biol.">
        <title>Genomic insights into methanotrophy: the complete genome sequence of Methylococcus capsulatus (Bath).</title>
        <authorList>
            <person name="Ward N.L."/>
            <person name="Larsen O."/>
            <person name="Sakwa J."/>
            <person name="Bruseth L."/>
            <person name="Khouri H.M."/>
            <person name="Durkin A.S."/>
            <person name="Dimitrov G."/>
            <person name="Jiang L."/>
            <person name="Scanlan D."/>
            <person name="Kang K.H."/>
            <person name="Lewis M.R."/>
            <person name="Nelson K.E."/>
            <person name="Methe B.A."/>
            <person name="Wu M."/>
            <person name="Heidelberg J.F."/>
            <person name="Paulsen I.T."/>
            <person name="Fouts D.E."/>
            <person name="Ravel J."/>
            <person name="Tettelin H."/>
            <person name="Ren Q."/>
            <person name="Read T.D."/>
            <person name="DeBoy R.T."/>
            <person name="Seshadri R."/>
            <person name="Salzberg S.L."/>
            <person name="Jensen H.B."/>
            <person name="Birkeland N.K."/>
            <person name="Nelson W.C."/>
            <person name="Dodson R.J."/>
            <person name="Grindhaug S.H."/>
            <person name="Holt I.E."/>
            <person name="Eidhammer I."/>
            <person name="Jonasen I."/>
            <person name="Vanaken S."/>
            <person name="Utterback T.R."/>
            <person name="Feldblyum T.V."/>
            <person name="Fraser C.M."/>
            <person name="Lillehaug J.R."/>
            <person name="Eisen J.A."/>
        </authorList>
    </citation>
    <scope>NUCLEOTIDE SEQUENCE [LARGE SCALE GENOMIC DNA]</scope>
    <source>
        <strain>ATCC 33009 / NCIMB 11132 / Bath</strain>
    </source>
</reference>
<evidence type="ECO:0000255" key="1">
    <source>
        <dbReference type="HAMAP-Rule" id="MF_00758"/>
    </source>
</evidence>
<proteinExistence type="inferred from homology"/>
<keyword id="KW-1185">Reference proteome</keyword>
<comment type="similarity">
    <text evidence="1">Belongs to the UPF0301 (AlgH) family.</text>
</comment>
<organism>
    <name type="scientific">Methylococcus capsulatus (strain ATCC 33009 / NCIMB 11132 / Bath)</name>
    <dbReference type="NCBI Taxonomy" id="243233"/>
    <lineage>
        <taxon>Bacteria</taxon>
        <taxon>Pseudomonadati</taxon>
        <taxon>Pseudomonadota</taxon>
        <taxon>Gammaproteobacteria</taxon>
        <taxon>Methylococcales</taxon>
        <taxon>Methylococcaceae</taxon>
        <taxon>Methylococcus</taxon>
    </lineage>
</organism>
<accession>Q60BQ2</accession>